<dbReference type="EC" id="3.4.21.92" evidence="1"/>
<dbReference type="EMBL" id="BA000040">
    <property type="protein sequence ID" value="BAC45876.1"/>
    <property type="molecule type" value="Genomic_DNA"/>
</dbReference>
<dbReference type="RefSeq" id="NP_767251.1">
    <property type="nucleotide sequence ID" value="NC_004463.1"/>
</dbReference>
<dbReference type="RefSeq" id="WP_011083439.1">
    <property type="nucleotide sequence ID" value="NC_004463.1"/>
</dbReference>
<dbReference type="SMR" id="Q89WR7"/>
<dbReference type="STRING" id="224911.AAV28_42330"/>
<dbReference type="MEROPS" id="S14.001"/>
<dbReference type="EnsemblBacteria" id="BAC45876">
    <property type="protein sequence ID" value="BAC45876"/>
    <property type="gene ID" value="BAC45876"/>
</dbReference>
<dbReference type="GeneID" id="46495756"/>
<dbReference type="KEGG" id="bja:blr0611"/>
<dbReference type="PATRIC" id="fig|224911.44.peg.9151"/>
<dbReference type="eggNOG" id="COG0740">
    <property type="taxonomic scope" value="Bacteria"/>
</dbReference>
<dbReference type="HOGENOM" id="CLU_058707_3_2_5"/>
<dbReference type="InParanoid" id="Q89WR7"/>
<dbReference type="OrthoDB" id="9802800at2"/>
<dbReference type="PhylomeDB" id="Q89WR7"/>
<dbReference type="Proteomes" id="UP000002526">
    <property type="component" value="Chromosome"/>
</dbReference>
<dbReference type="GO" id="GO:0005737">
    <property type="term" value="C:cytoplasm"/>
    <property type="evidence" value="ECO:0007669"/>
    <property type="project" value="UniProtKB-SubCell"/>
</dbReference>
<dbReference type="GO" id="GO:0009368">
    <property type="term" value="C:endopeptidase Clp complex"/>
    <property type="evidence" value="ECO:0000318"/>
    <property type="project" value="GO_Central"/>
</dbReference>
<dbReference type="GO" id="GO:0004176">
    <property type="term" value="F:ATP-dependent peptidase activity"/>
    <property type="evidence" value="ECO:0000318"/>
    <property type="project" value="GO_Central"/>
</dbReference>
<dbReference type="GO" id="GO:0051117">
    <property type="term" value="F:ATPase binding"/>
    <property type="evidence" value="ECO:0000318"/>
    <property type="project" value="GO_Central"/>
</dbReference>
<dbReference type="GO" id="GO:0004252">
    <property type="term" value="F:serine-type endopeptidase activity"/>
    <property type="evidence" value="ECO:0000318"/>
    <property type="project" value="GO_Central"/>
</dbReference>
<dbReference type="GO" id="GO:0006515">
    <property type="term" value="P:protein quality control for misfolded or incompletely synthesized proteins"/>
    <property type="evidence" value="ECO:0000318"/>
    <property type="project" value="GO_Central"/>
</dbReference>
<dbReference type="CDD" id="cd07017">
    <property type="entry name" value="S14_ClpP_2"/>
    <property type="match status" value="1"/>
</dbReference>
<dbReference type="FunFam" id="3.90.226.10:FF:000001">
    <property type="entry name" value="ATP-dependent Clp protease proteolytic subunit"/>
    <property type="match status" value="1"/>
</dbReference>
<dbReference type="Gene3D" id="3.90.226.10">
    <property type="entry name" value="2-enoyl-CoA Hydratase, Chain A, domain 1"/>
    <property type="match status" value="1"/>
</dbReference>
<dbReference type="HAMAP" id="MF_00444">
    <property type="entry name" value="ClpP"/>
    <property type="match status" value="1"/>
</dbReference>
<dbReference type="InterPro" id="IPR001907">
    <property type="entry name" value="ClpP"/>
</dbReference>
<dbReference type="InterPro" id="IPR029045">
    <property type="entry name" value="ClpP/crotonase-like_dom_sf"/>
</dbReference>
<dbReference type="InterPro" id="IPR023562">
    <property type="entry name" value="ClpP/TepA"/>
</dbReference>
<dbReference type="NCBIfam" id="NF001368">
    <property type="entry name" value="PRK00277.1"/>
    <property type="match status" value="1"/>
</dbReference>
<dbReference type="PANTHER" id="PTHR10381">
    <property type="entry name" value="ATP-DEPENDENT CLP PROTEASE PROTEOLYTIC SUBUNIT"/>
    <property type="match status" value="1"/>
</dbReference>
<dbReference type="PANTHER" id="PTHR10381:SF70">
    <property type="entry name" value="ATP-DEPENDENT CLP PROTEASE PROTEOLYTIC SUBUNIT"/>
    <property type="match status" value="1"/>
</dbReference>
<dbReference type="Pfam" id="PF00574">
    <property type="entry name" value="CLP_protease"/>
    <property type="match status" value="1"/>
</dbReference>
<dbReference type="PRINTS" id="PR00127">
    <property type="entry name" value="CLPPROTEASEP"/>
</dbReference>
<dbReference type="SUPFAM" id="SSF52096">
    <property type="entry name" value="ClpP/crotonase"/>
    <property type="match status" value="1"/>
</dbReference>
<protein>
    <recommendedName>
        <fullName evidence="1">ATP-dependent Clp protease proteolytic subunit 1</fullName>
        <ecNumber evidence="1">3.4.21.92</ecNumber>
    </recommendedName>
    <alternativeName>
        <fullName evidence="1">Endopeptidase Clp 1</fullName>
    </alternativeName>
</protein>
<organism>
    <name type="scientific">Bradyrhizobium diazoefficiens (strain JCM 10833 / BCRC 13528 / IAM 13628 / NBRC 14792 / USDA 110)</name>
    <dbReference type="NCBI Taxonomy" id="224911"/>
    <lineage>
        <taxon>Bacteria</taxon>
        <taxon>Pseudomonadati</taxon>
        <taxon>Pseudomonadota</taxon>
        <taxon>Alphaproteobacteria</taxon>
        <taxon>Hyphomicrobiales</taxon>
        <taxon>Nitrobacteraceae</taxon>
        <taxon>Bradyrhizobium</taxon>
    </lineage>
</organism>
<keyword id="KW-0963">Cytoplasm</keyword>
<keyword id="KW-0378">Hydrolase</keyword>
<keyword id="KW-0645">Protease</keyword>
<keyword id="KW-1185">Reference proteome</keyword>
<keyword id="KW-0720">Serine protease</keyword>
<gene>
    <name evidence="1" type="primary">clpP1</name>
    <name type="ordered locus">blr0611</name>
</gene>
<name>CLPP1_BRADU</name>
<accession>Q89WR7</accession>
<reference key="1">
    <citation type="journal article" date="2002" name="DNA Res.">
        <title>Complete genomic sequence of nitrogen-fixing symbiotic bacterium Bradyrhizobium japonicum USDA110.</title>
        <authorList>
            <person name="Kaneko T."/>
            <person name="Nakamura Y."/>
            <person name="Sato S."/>
            <person name="Minamisawa K."/>
            <person name="Uchiumi T."/>
            <person name="Sasamoto S."/>
            <person name="Watanabe A."/>
            <person name="Idesawa K."/>
            <person name="Iriguchi M."/>
            <person name="Kawashima K."/>
            <person name="Kohara M."/>
            <person name="Matsumoto M."/>
            <person name="Shimpo S."/>
            <person name="Tsuruoka H."/>
            <person name="Wada T."/>
            <person name="Yamada M."/>
            <person name="Tabata S."/>
        </authorList>
    </citation>
    <scope>NUCLEOTIDE SEQUENCE [LARGE SCALE GENOMIC DNA]</scope>
    <source>
        <strain>JCM 10833 / BCRC 13528 / IAM 13628 / NBRC 14792 / USDA 110</strain>
    </source>
</reference>
<comment type="function">
    <text evidence="1">Cleaves peptides in various proteins in a process that requires ATP hydrolysis. Has a chymotrypsin-like activity. Plays a major role in the degradation of misfolded proteins.</text>
</comment>
<comment type="catalytic activity">
    <reaction evidence="1">
        <text>Hydrolysis of proteins to small peptides in the presence of ATP and magnesium. alpha-casein is the usual test substrate. In the absence of ATP, only oligopeptides shorter than five residues are hydrolyzed (such as succinyl-Leu-Tyr-|-NHMec, and Leu-Tyr-Leu-|-Tyr-Trp, in which cleavage of the -Tyr-|-Leu- and -Tyr-|-Trp bonds also occurs).</text>
        <dbReference type="EC" id="3.4.21.92"/>
    </reaction>
</comment>
<comment type="subunit">
    <text evidence="1">Fourteen ClpP subunits assemble into 2 heptameric rings which stack back to back to give a disk-like structure with a central cavity, resembling the structure of eukaryotic proteasomes.</text>
</comment>
<comment type="subcellular location">
    <subcellularLocation>
        <location evidence="1">Cytoplasm</location>
    </subcellularLocation>
</comment>
<comment type="similarity">
    <text evidence="1">Belongs to the peptidase S14 family.</text>
</comment>
<feature type="chain" id="PRO_0000179514" description="ATP-dependent Clp protease proteolytic subunit 1">
    <location>
        <begin position="1"/>
        <end position="200"/>
    </location>
</feature>
<feature type="active site" description="Nucleophile" evidence="1">
    <location>
        <position position="102"/>
    </location>
</feature>
<feature type="active site" evidence="1">
    <location>
        <position position="127"/>
    </location>
</feature>
<sequence>MRDMLQLVPMVVEQSARGERSFDIYSRLLRERIIFLNGEVNDAMSGLVCAQLLFLEAENPNRPINLYINSYGGVVTSGLAMYDTMQFIKAPVHTLCMGTARSMGSFLLMAGERGHRAALPNASLHVHQPLGGFQGQASDILIHANEMQETKRRITRLYAQHCGRTEAEVERTLDRDHFMTAQQGVEWGLIDRVFAERDAT</sequence>
<evidence type="ECO:0000255" key="1">
    <source>
        <dbReference type="HAMAP-Rule" id="MF_00444"/>
    </source>
</evidence>
<proteinExistence type="inferred from homology"/>